<comment type="function">
    <text evidence="1">Binds the lower part of the 30S subunit head.</text>
</comment>
<comment type="subunit">
    <text evidence="1">Part of the 30S ribosomal subunit.</text>
</comment>
<comment type="similarity">
    <text evidence="1">Belongs to the universal ribosomal protein uS3 family.</text>
</comment>
<reference key="1">
    <citation type="journal article" date="2003" name="Mol. Microbiol.">
        <title>An integrated analysis of the genome of the hyperthermophilic archaeon Pyrococcus abyssi.</title>
        <authorList>
            <person name="Cohen G.N."/>
            <person name="Barbe V."/>
            <person name="Flament D."/>
            <person name="Galperin M."/>
            <person name="Heilig R."/>
            <person name="Lecompte O."/>
            <person name="Poch O."/>
            <person name="Prieur D."/>
            <person name="Querellou J."/>
            <person name="Ripp R."/>
            <person name="Thierry J.-C."/>
            <person name="Van der Oost J."/>
            <person name="Weissenbach J."/>
            <person name="Zivanovic Y."/>
            <person name="Forterre P."/>
        </authorList>
    </citation>
    <scope>NUCLEOTIDE SEQUENCE [LARGE SCALE GENOMIC DNA]</scope>
    <source>
        <strain>GE5 / Orsay</strain>
    </source>
</reference>
<reference key="2">
    <citation type="journal article" date="2012" name="Curr. Microbiol.">
        <title>Re-annotation of two hyperthermophilic archaea Pyrococcus abyssi GE5 and Pyrococcus furiosus DSM 3638.</title>
        <authorList>
            <person name="Gao J."/>
            <person name="Wang J."/>
        </authorList>
    </citation>
    <scope>GENOME REANNOTATION</scope>
    <source>
        <strain>GE5 / Orsay</strain>
    </source>
</reference>
<keyword id="KW-0002">3D-structure</keyword>
<keyword id="KW-0687">Ribonucleoprotein</keyword>
<keyword id="KW-0689">Ribosomal protein</keyword>
<keyword id="KW-0694">RNA-binding</keyword>
<keyword id="KW-0699">rRNA-binding</keyword>
<sequence>MAIERYFIREAVKEMLIDEFLEKELRRAGYGGLDIKKTPLGTKVIIFAANPGYVIGRGGRRIRELTRILERQFGLENPQIDVQEIKNPYLNAKVQAVRIAQALERGIHFRRAAYAAMRAIMSNGARGVEIRISGKLTGERAKSVRFYQGYLAKVGNPAETLVSKGYAQALLKLGVIGVKVAIMPPDARLPDEIEIIEKPVEEEVSSNEAE</sequence>
<evidence type="ECO:0000255" key="1">
    <source>
        <dbReference type="HAMAP-Rule" id="MF_01309"/>
    </source>
</evidence>
<evidence type="ECO:0000305" key="2"/>
<evidence type="ECO:0007829" key="3">
    <source>
        <dbReference type="PDB" id="7ZHG"/>
    </source>
</evidence>
<protein>
    <recommendedName>
        <fullName evidence="1">Small ribosomal subunit protein uS3</fullName>
    </recommendedName>
    <alternativeName>
        <fullName evidence="2">30S ribosomal protein S3</fullName>
    </alternativeName>
</protein>
<organism>
    <name type="scientific">Pyrococcus abyssi (strain GE5 / Orsay)</name>
    <dbReference type="NCBI Taxonomy" id="272844"/>
    <lineage>
        <taxon>Archaea</taxon>
        <taxon>Methanobacteriati</taxon>
        <taxon>Methanobacteriota</taxon>
        <taxon>Thermococci</taxon>
        <taxon>Thermococcales</taxon>
        <taxon>Thermococcaceae</taxon>
        <taxon>Pyrococcus</taxon>
    </lineage>
</organism>
<feature type="chain" id="PRO_0000130256" description="Small ribosomal subunit protein uS3">
    <location>
        <begin position="1"/>
        <end position="210"/>
    </location>
</feature>
<feature type="domain" description="KH type-2" evidence="1">
    <location>
        <begin position="17"/>
        <end position="86"/>
    </location>
</feature>
<feature type="helix" evidence="3">
    <location>
        <begin position="3"/>
        <end position="24"/>
    </location>
</feature>
<feature type="turn" evidence="3">
    <location>
        <begin position="25"/>
        <end position="29"/>
    </location>
</feature>
<feature type="strand" evidence="3">
    <location>
        <begin position="33"/>
        <end position="38"/>
    </location>
</feature>
<feature type="strand" evidence="3">
    <location>
        <begin position="41"/>
        <end position="49"/>
    </location>
</feature>
<feature type="helix" evidence="3">
    <location>
        <begin position="51"/>
        <end position="55"/>
    </location>
</feature>
<feature type="strand" evidence="3">
    <location>
        <begin position="57"/>
        <end position="61"/>
    </location>
</feature>
<feature type="helix" evidence="3">
    <location>
        <begin position="62"/>
        <end position="71"/>
    </location>
</feature>
<feature type="strand" evidence="3">
    <location>
        <begin position="76"/>
        <end position="84"/>
    </location>
</feature>
<feature type="helix" evidence="3">
    <location>
        <begin position="88"/>
        <end position="90"/>
    </location>
</feature>
<feature type="helix" evidence="3">
    <location>
        <begin position="92"/>
        <end position="105"/>
    </location>
</feature>
<feature type="helix" evidence="3">
    <location>
        <begin position="109"/>
        <end position="122"/>
    </location>
</feature>
<feature type="strand" evidence="3">
    <location>
        <begin position="126"/>
        <end position="134"/>
    </location>
</feature>
<feature type="strand" evidence="3">
    <location>
        <begin position="137"/>
        <end position="140"/>
    </location>
</feature>
<feature type="strand" evidence="3">
    <location>
        <begin position="142"/>
        <end position="149"/>
    </location>
</feature>
<feature type="helix" evidence="3">
    <location>
        <begin position="156"/>
        <end position="161"/>
    </location>
</feature>
<feature type="strand" evidence="3">
    <location>
        <begin position="163"/>
        <end position="171"/>
    </location>
</feature>
<feature type="strand" evidence="3">
    <location>
        <begin position="174"/>
        <end position="183"/>
    </location>
</feature>
<dbReference type="EMBL" id="AJ248284">
    <property type="protein sequence ID" value="CAB49258.1"/>
    <property type="molecule type" value="Genomic_DNA"/>
</dbReference>
<dbReference type="EMBL" id="HE613800">
    <property type="protein sequence ID" value="CCE69713.1"/>
    <property type="molecule type" value="Genomic_DNA"/>
</dbReference>
<dbReference type="PIR" id="C75147">
    <property type="entry name" value="C75147"/>
</dbReference>
<dbReference type="RefSeq" id="WP_010867458.1">
    <property type="nucleotide sequence ID" value="NC_000868.1"/>
</dbReference>
<dbReference type="PDB" id="6SW9">
    <property type="method" value="EM"/>
    <property type="resolution" value="4.20 A"/>
    <property type="chains" value="Z=1-210"/>
</dbReference>
<dbReference type="PDB" id="6SWC">
    <property type="method" value="EM"/>
    <property type="resolution" value="3.30 A"/>
    <property type="chains" value="Z=1-210"/>
</dbReference>
<dbReference type="PDB" id="6SWE">
    <property type="method" value="EM"/>
    <property type="resolution" value="3.10 A"/>
    <property type="chains" value="Z=1-210"/>
</dbReference>
<dbReference type="PDB" id="7ZAG">
    <property type="method" value="EM"/>
    <property type="resolution" value="2.77 A"/>
    <property type="chains" value="Z=1-210"/>
</dbReference>
<dbReference type="PDB" id="7ZAH">
    <property type="method" value="EM"/>
    <property type="resolution" value="2.70 A"/>
    <property type="chains" value="Z=1-210"/>
</dbReference>
<dbReference type="PDB" id="7ZAI">
    <property type="method" value="EM"/>
    <property type="resolution" value="2.60 A"/>
    <property type="chains" value="Z=1-210"/>
</dbReference>
<dbReference type="PDB" id="7ZHG">
    <property type="method" value="EM"/>
    <property type="resolution" value="2.25 A"/>
    <property type="chains" value="Z=1-210"/>
</dbReference>
<dbReference type="PDBsum" id="6SW9"/>
<dbReference type="PDBsum" id="6SWC"/>
<dbReference type="PDBsum" id="6SWE"/>
<dbReference type="PDBsum" id="7ZAG"/>
<dbReference type="PDBsum" id="7ZAH"/>
<dbReference type="PDBsum" id="7ZAI"/>
<dbReference type="PDBsum" id="7ZHG"/>
<dbReference type="EMDB" id="EMD-10320"/>
<dbReference type="EMDB" id="EMD-10322"/>
<dbReference type="EMDB" id="EMD-10324"/>
<dbReference type="EMDB" id="EMD-14579"/>
<dbReference type="EMDB" id="EMD-14580"/>
<dbReference type="EMDB" id="EMD-14581"/>
<dbReference type="EMDB" id="EMD-14731"/>
<dbReference type="EMDB" id="EMD-8148"/>
<dbReference type="SMR" id="Q9V1U1"/>
<dbReference type="STRING" id="272844.PAB2125"/>
<dbReference type="KEGG" id="pab:PAB2125"/>
<dbReference type="PATRIC" id="fig|272844.11.peg.357"/>
<dbReference type="eggNOG" id="arCOG04097">
    <property type="taxonomic scope" value="Archaea"/>
</dbReference>
<dbReference type="HOGENOM" id="CLU_058591_1_1_2"/>
<dbReference type="OrthoDB" id="9126at2157"/>
<dbReference type="PhylomeDB" id="Q9V1U1"/>
<dbReference type="Proteomes" id="UP000000810">
    <property type="component" value="Chromosome"/>
</dbReference>
<dbReference type="Proteomes" id="UP000009139">
    <property type="component" value="Chromosome"/>
</dbReference>
<dbReference type="GO" id="GO:0022627">
    <property type="term" value="C:cytosolic small ribosomal subunit"/>
    <property type="evidence" value="ECO:0007669"/>
    <property type="project" value="TreeGrafter"/>
</dbReference>
<dbReference type="GO" id="GO:0019843">
    <property type="term" value="F:rRNA binding"/>
    <property type="evidence" value="ECO:0007669"/>
    <property type="project" value="UniProtKB-UniRule"/>
</dbReference>
<dbReference type="GO" id="GO:0003735">
    <property type="term" value="F:structural constituent of ribosome"/>
    <property type="evidence" value="ECO:0007669"/>
    <property type="project" value="InterPro"/>
</dbReference>
<dbReference type="GO" id="GO:0006412">
    <property type="term" value="P:translation"/>
    <property type="evidence" value="ECO:0007669"/>
    <property type="project" value="UniProtKB-UniRule"/>
</dbReference>
<dbReference type="CDD" id="cd02411">
    <property type="entry name" value="KH-II_30S_S3_arch"/>
    <property type="match status" value="1"/>
</dbReference>
<dbReference type="FunFam" id="3.30.1140.32:FF:000012">
    <property type="entry name" value="30S ribosomal protein S3"/>
    <property type="match status" value="1"/>
</dbReference>
<dbReference type="FunFam" id="3.30.300.20:FF:000001">
    <property type="entry name" value="30S ribosomal protein S3"/>
    <property type="match status" value="1"/>
</dbReference>
<dbReference type="Gene3D" id="3.30.300.20">
    <property type="match status" value="1"/>
</dbReference>
<dbReference type="Gene3D" id="3.30.1140.32">
    <property type="entry name" value="Ribosomal protein S3, C-terminal domain"/>
    <property type="match status" value="1"/>
</dbReference>
<dbReference type="HAMAP" id="MF_01309_A">
    <property type="entry name" value="Ribosomal_uS3_A"/>
    <property type="match status" value="1"/>
</dbReference>
<dbReference type="InterPro" id="IPR004087">
    <property type="entry name" value="KH_dom"/>
</dbReference>
<dbReference type="InterPro" id="IPR015946">
    <property type="entry name" value="KH_dom-like_a/b"/>
</dbReference>
<dbReference type="InterPro" id="IPR004044">
    <property type="entry name" value="KH_dom_type_2"/>
</dbReference>
<dbReference type="InterPro" id="IPR009019">
    <property type="entry name" value="KH_sf_prok-type"/>
</dbReference>
<dbReference type="InterPro" id="IPR036419">
    <property type="entry name" value="Ribosomal_S3_C_sf"/>
</dbReference>
<dbReference type="InterPro" id="IPR027488">
    <property type="entry name" value="Ribosomal_uS3_arc"/>
</dbReference>
<dbReference type="InterPro" id="IPR001351">
    <property type="entry name" value="Ribosomal_uS3_C"/>
</dbReference>
<dbReference type="InterPro" id="IPR005703">
    <property type="entry name" value="Ribosomal_uS3_euk/arc"/>
</dbReference>
<dbReference type="NCBIfam" id="NF003219">
    <property type="entry name" value="PRK04191.1"/>
    <property type="match status" value="1"/>
</dbReference>
<dbReference type="NCBIfam" id="TIGR01008">
    <property type="entry name" value="uS3_euk_arch"/>
    <property type="match status" value="1"/>
</dbReference>
<dbReference type="PANTHER" id="PTHR11760">
    <property type="entry name" value="30S/40S RIBOSOMAL PROTEIN S3"/>
    <property type="match status" value="1"/>
</dbReference>
<dbReference type="PANTHER" id="PTHR11760:SF32">
    <property type="entry name" value="SMALL RIBOSOMAL SUBUNIT PROTEIN US3"/>
    <property type="match status" value="1"/>
</dbReference>
<dbReference type="Pfam" id="PF07650">
    <property type="entry name" value="KH_2"/>
    <property type="match status" value="1"/>
</dbReference>
<dbReference type="Pfam" id="PF00189">
    <property type="entry name" value="Ribosomal_S3_C"/>
    <property type="match status" value="1"/>
</dbReference>
<dbReference type="SMART" id="SM00322">
    <property type="entry name" value="KH"/>
    <property type="match status" value="1"/>
</dbReference>
<dbReference type="SUPFAM" id="SSF54814">
    <property type="entry name" value="Prokaryotic type KH domain (KH-domain type II)"/>
    <property type="match status" value="1"/>
</dbReference>
<dbReference type="SUPFAM" id="SSF54821">
    <property type="entry name" value="Ribosomal protein S3 C-terminal domain"/>
    <property type="match status" value="1"/>
</dbReference>
<dbReference type="PROSITE" id="PS50823">
    <property type="entry name" value="KH_TYPE_2"/>
    <property type="match status" value="1"/>
</dbReference>
<gene>
    <name evidence="1" type="primary">rps3</name>
    <name type="ordered locus">PYRAB03360</name>
    <name type="ORF">PAB2125</name>
</gene>
<name>RS3_PYRAB</name>
<proteinExistence type="evidence at protein level"/>
<accession>Q9V1U1</accession>
<accession>G8ZHX0</accession>